<comment type="function">
    <text evidence="1 2 3">Involved in the biosynthesis of the azoxy antibiotic valanimycin, which has an antitumor activity (PubMed:8990292, PubMed:9056232, PubMed:9287340). Catalyzes the oxidation of isobutylamine to isobutylhydroxylamine via the formation of a flavin 4a-hydroperoxide (PubMed:8990292, PubMed:9056232, PubMed:9287340). Unlike other known N-hydroxylases, isobutylamine N-hydroxylase cannot carry out the reduction of the flavin cofactor and requires the NADPH-flavin oxidoreductase VlmR (PubMed:9056232). Also able to oxidize propan-1-amine, butan-1-amine, butan-2-amine and benzylamine (PubMed:9056232). It has a similar activity with either FMNH(2) or FADH(2) (PubMed:9056232).</text>
</comment>
<comment type="catalytic activity">
    <reaction evidence="1 2">
        <text>2-methylpropan-1-amine + FADH2 + O2 = N-(2-methylpropyl)hydroxylamine + FAD + H2O + 2 H(+)</text>
        <dbReference type="Rhea" id="RHEA:48864"/>
        <dbReference type="ChEBI" id="CHEBI:15377"/>
        <dbReference type="ChEBI" id="CHEBI:15378"/>
        <dbReference type="ChEBI" id="CHEBI:15379"/>
        <dbReference type="ChEBI" id="CHEBI:57601"/>
        <dbReference type="ChEBI" id="CHEBI:57692"/>
        <dbReference type="ChEBI" id="CHEBI:58307"/>
        <dbReference type="ChEBI" id="CHEBI:131928"/>
        <dbReference type="EC" id="1.14.14.30"/>
    </reaction>
</comment>
<comment type="catalytic activity">
    <reaction evidence="1 2">
        <text>2-methylpropan-1-amine + FMNH2 + O2 = N-(2-methylpropyl)hydroxylamine + FMN + H2O + 2 H(+)</text>
        <dbReference type="Rhea" id="RHEA:49804"/>
        <dbReference type="ChEBI" id="CHEBI:15377"/>
        <dbReference type="ChEBI" id="CHEBI:15378"/>
        <dbReference type="ChEBI" id="CHEBI:15379"/>
        <dbReference type="ChEBI" id="CHEBI:57601"/>
        <dbReference type="ChEBI" id="CHEBI:57618"/>
        <dbReference type="ChEBI" id="CHEBI:58210"/>
        <dbReference type="ChEBI" id="CHEBI:131928"/>
        <dbReference type="EC" id="1.14.14.30"/>
    </reaction>
</comment>
<comment type="activity regulation">
    <text evidence="2">Inhibited by 5',5'-dithio-bis(2-nitrobenzoic acid) (DTNB) and 4-(hydroxymercuri)benzoic acid (p-HMB).</text>
</comment>
<comment type="subunit">
    <text evidence="2">Exists in dimeric or trimeric form depending upon buffer conditions (PubMed:9056232). It can form an isobutylamine N-hydroxylase two component enzyme system formed of a flavin reductase component (VlmR) and a monooxygenase component (VlmH).</text>
</comment>
<reference key="1">
    <citation type="journal article" date="1997" name="Arch. Biochem. Biophys.">
        <title>Purification and characterization of isobutylamine N-hydroxylase from the valanimycin producer Streptomyces viridifaciens MG456-hF10.</title>
        <authorList>
            <person name="Parry R.J."/>
            <person name="Li W."/>
        </authorList>
    </citation>
    <scope>NUCLEOTIDE SEQUENCE [GENOMIC DNA]</scope>
    <scope>PROTEIN SEQUENCE OF 1-45</scope>
    <scope>FUNCTION</scope>
    <scope>CATALYTIC ACTIVITY</scope>
    <scope>ACTIVITY REGULATION</scope>
    <scope>SUBSTRATE SPECIFICITY</scope>
    <scope>SUBUNIT</scope>
    <source>
        <strain evidence="7">MG456-hF10</strain>
    </source>
</reference>
<reference key="2">
    <citation type="journal article" date="1997" name="J. Bacteriol.">
        <title>Cloning, analysis, and overexpression of the gene encoding isobutylamine N-hydroxylase from the valanimycin producer, Streptomyces viridifaciens.</title>
        <authorList>
            <person name="Parry R.J."/>
            <person name="Li W."/>
            <person name="Cooper H.N."/>
        </authorList>
    </citation>
    <scope>NUCLEOTIDE SEQUENCE [GENOMIC DNA]</scope>
    <scope>PROTEIN SEQUENCE OF 1-45</scope>
    <scope>FUNCTION</scope>
    <scope>CATALYTIC ACTIVITY</scope>
    <source>
        <strain evidence="7">MG456-hF10</strain>
    </source>
</reference>
<reference key="3">
    <citation type="journal article" date="2000" name="Microbiology">
        <title>A novel valanimycin-resistance determinant (vlmF) from Streptomyces viridifaciens MG456-hF10.</title>
        <authorList>
            <person name="Ma Y."/>
            <person name="Patel J."/>
            <person name="Parry R.J."/>
        </authorList>
    </citation>
    <scope>NUCLEOTIDE SEQUENCE [GENOMIC DNA]</scope>
    <source>
        <strain evidence="7">MG456-hF10</strain>
    </source>
</reference>
<reference key="4">
    <citation type="journal article" date="2002" name="Mol. Microbiol.">
        <title>Molecular characterization and analysis of the biosynthetic gene cluster for the azoxy antibiotic valanimycin.</title>
        <authorList>
            <person name="Garg R.P."/>
            <person name="Ma Y."/>
            <person name="Hoyt J.C."/>
            <person name="Parry R.J."/>
        </authorList>
    </citation>
    <scope>NUCLEOTIDE SEQUENCE [GENOMIC DNA]</scope>
    <source>
        <strain evidence="7">MG456-hF10</strain>
    </source>
</reference>
<reference key="5">
    <citation type="journal article" date="1997" name="J. Biol. Chem.">
        <title>An NADPH:FAD oxidoreductase from the valanimycin producer, Streptomyces viridifaciens. Cloning, analysis, and overexpression.</title>
        <authorList>
            <person name="Parry R.J."/>
            <person name="Li W."/>
        </authorList>
    </citation>
    <scope>FUNCTION</scope>
</reference>
<protein>
    <recommendedName>
        <fullName evidence="5">Isobutylamine N-hydroxylase</fullName>
        <shortName evidence="4">IBAH</shortName>
        <ecNumber evidence="1 2">1.14.14.30</ecNumber>
    </recommendedName>
    <alternativeName>
        <fullName evidence="5">Flavin monooxygenase</fullName>
    </alternativeName>
    <alternativeName>
        <fullName evidence="6">Isobutylamine N-hydroxylase, monooxygenase component</fullName>
    </alternativeName>
</protein>
<name>VLMH_STRVF</name>
<sequence>MRSLDAARDTCERLHPGLIKALEELPLLEREAEGSPVLDIFRAHGGAGLLVPSAYGGHGADALDAVRVTRALGACSPSLAAAATMHNFTAAMLFALTDRVIPPTDEQKKLLARVAPEGMLLASGWAEGRTQQDILNPSVKATPVDDGFILNGSKKPCSLSRSMDILTASVILPDETGQQSLAVPLIMADSPGISVHPFWESPVLAGSQSNEVRLKDVHVPEKLIIRGTPDDPGRLDDLQTATFVWFELLITSAYVGAASALTELVMERDRGSVTDRAALGIQLESAVGLTEGVARAVRDGVFGEEAVAAALTARFAVQKTLAAISDQAIELLGGIAFIKSPELAYLSSALHPLAFHPPGRTSSSPHLVEYFSGGPLEI</sequence>
<keyword id="KW-0045">Antibiotic biosynthesis</keyword>
<keyword id="KW-0903">Direct protein sequencing</keyword>
<keyword id="KW-0274">FAD</keyword>
<keyword id="KW-0285">Flavoprotein</keyword>
<keyword id="KW-0288">FMN</keyword>
<keyword id="KW-0560">Oxidoreductase</keyword>
<dbReference type="EC" id="1.14.14.30" evidence="1 2"/>
<dbReference type="EMBL" id="AY116644">
    <property type="protein sequence ID" value="AAN10237.1"/>
    <property type="molecule type" value="Genomic_DNA"/>
</dbReference>
<dbReference type="SMR" id="P96072"/>
<dbReference type="KEGG" id="ag:AAN10237"/>
<dbReference type="BioCyc" id="MetaCyc:MONOMER-17644"/>
<dbReference type="GO" id="GO:0003995">
    <property type="term" value="F:acyl-CoA dehydrogenase activity"/>
    <property type="evidence" value="ECO:0007669"/>
    <property type="project" value="TreeGrafter"/>
</dbReference>
<dbReference type="GO" id="GO:0050660">
    <property type="term" value="F:flavin adenine dinucleotide binding"/>
    <property type="evidence" value="ECO:0007669"/>
    <property type="project" value="InterPro"/>
</dbReference>
<dbReference type="GO" id="GO:0017000">
    <property type="term" value="P:antibiotic biosynthetic process"/>
    <property type="evidence" value="ECO:0007669"/>
    <property type="project" value="UniProtKB-KW"/>
</dbReference>
<dbReference type="Gene3D" id="1.10.540.10">
    <property type="entry name" value="Acyl-CoA dehydrogenase/oxidase, N-terminal domain"/>
    <property type="match status" value="1"/>
</dbReference>
<dbReference type="Gene3D" id="2.40.110.10">
    <property type="entry name" value="Butyryl-CoA Dehydrogenase, subunit A, domain 2"/>
    <property type="match status" value="1"/>
</dbReference>
<dbReference type="InterPro" id="IPR046373">
    <property type="entry name" value="Acyl-CoA_Oxase/DH_mid-dom_sf"/>
</dbReference>
<dbReference type="InterPro" id="IPR036250">
    <property type="entry name" value="AcylCo_DH-like_C"/>
</dbReference>
<dbReference type="InterPro" id="IPR013786">
    <property type="entry name" value="AcylCoA_DH/ox_N"/>
</dbReference>
<dbReference type="InterPro" id="IPR037069">
    <property type="entry name" value="AcylCoA_DH/ox_N_sf"/>
</dbReference>
<dbReference type="InterPro" id="IPR009100">
    <property type="entry name" value="AcylCoA_DH/oxidase_NM_dom_sf"/>
</dbReference>
<dbReference type="PANTHER" id="PTHR43884">
    <property type="entry name" value="ACYL-COA DEHYDROGENASE"/>
    <property type="match status" value="1"/>
</dbReference>
<dbReference type="PANTHER" id="PTHR43884:SF20">
    <property type="entry name" value="ACYL-COA DEHYDROGENASE FADE28"/>
    <property type="match status" value="1"/>
</dbReference>
<dbReference type="Pfam" id="PF02771">
    <property type="entry name" value="Acyl-CoA_dh_N"/>
    <property type="match status" value="1"/>
</dbReference>
<dbReference type="SUPFAM" id="SSF47203">
    <property type="entry name" value="Acyl-CoA dehydrogenase C-terminal domain-like"/>
    <property type="match status" value="1"/>
</dbReference>
<dbReference type="SUPFAM" id="SSF56645">
    <property type="entry name" value="Acyl-CoA dehydrogenase NM domain-like"/>
    <property type="match status" value="1"/>
</dbReference>
<accession>P96072</accession>
<proteinExistence type="evidence at protein level"/>
<organism evidence="7">
    <name type="scientific">Streptomyces viridifaciens</name>
    <dbReference type="NCBI Taxonomy" id="48665"/>
    <lineage>
        <taxon>Bacteria</taxon>
        <taxon>Bacillati</taxon>
        <taxon>Actinomycetota</taxon>
        <taxon>Actinomycetes</taxon>
        <taxon>Kitasatosporales</taxon>
        <taxon>Streptomycetaceae</taxon>
        <taxon>Streptomyces</taxon>
    </lineage>
</organism>
<evidence type="ECO:0000269" key="1">
    <source>
    </source>
</evidence>
<evidence type="ECO:0000269" key="2">
    <source>
    </source>
</evidence>
<evidence type="ECO:0000269" key="3">
    <source>
    </source>
</evidence>
<evidence type="ECO:0000303" key="4">
    <source>
    </source>
</evidence>
<evidence type="ECO:0000303" key="5">
    <source>
    </source>
</evidence>
<evidence type="ECO:0000305" key="6">
    <source>
    </source>
</evidence>
<evidence type="ECO:0000312" key="7">
    <source>
        <dbReference type="EMBL" id="AAN10237.1"/>
    </source>
</evidence>
<gene>
    <name evidence="4" type="primary">vlmH</name>
</gene>
<feature type="chain" id="PRO_0000443526" description="Isobutylamine N-hydroxylase">
    <location>
        <begin position="1"/>
        <end position="378"/>
    </location>
</feature>